<name>GLGB_AGRFC</name>
<dbReference type="EC" id="2.4.1.18" evidence="1"/>
<dbReference type="EMBL" id="AE007870">
    <property type="protein sequence ID" value="AAK89352.1"/>
    <property type="molecule type" value="Genomic_DNA"/>
</dbReference>
<dbReference type="PIR" id="AH3057">
    <property type="entry name" value="AH3057"/>
</dbReference>
<dbReference type="PIR" id="F98228">
    <property type="entry name" value="F98228"/>
</dbReference>
<dbReference type="RefSeq" id="NP_356567.1">
    <property type="nucleotide sequence ID" value="NC_003063.2"/>
</dbReference>
<dbReference type="RefSeq" id="WP_006313779.1">
    <property type="nucleotide sequence ID" value="NC_003063.2"/>
</dbReference>
<dbReference type="SMR" id="Q8U8L4"/>
<dbReference type="STRING" id="176299.Atu4077"/>
<dbReference type="CAZy" id="CBM48">
    <property type="family name" value="Carbohydrate-Binding Module Family 48"/>
</dbReference>
<dbReference type="CAZy" id="GH13">
    <property type="family name" value="Glycoside Hydrolase Family 13"/>
</dbReference>
<dbReference type="EnsemblBacteria" id="AAK89352">
    <property type="protein sequence ID" value="AAK89352"/>
    <property type="gene ID" value="Atu4077"/>
</dbReference>
<dbReference type="GeneID" id="1135951"/>
<dbReference type="KEGG" id="atu:Atu4077"/>
<dbReference type="PATRIC" id="fig|176299.10.peg.3894"/>
<dbReference type="eggNOG" id="COG0296">
    <property type="taxonomic scope" value="Bacteria"/>
</dbReference>
<dbReference type="HOGENOM" id="CLU_004245_3_2_5"/>
<dbReference type="OrthoDB" id="9800174at2"/>
<dbReference type="PhylomeDB" id="Q8U8L4"/>
<dbReference type="BioCyc" id="AGRO:ATU4077-MONOMER"/>
<dbReference type="UniPathway" id="UPA00164"/>
<dbReference type="Proteomes" id="UP000000813">
    <property type="component" value="Chromosome linear"/>
</dbReference>
<dbReference type="GO" id="GO:0005829">
    <property type="term" value="C:cytosol"/>
    <property type="evidence" value="ECO:0007669"/>
    <property type="project" value="TreeGrafter"/>
</dbReference>
<dbReference type="GO" id="GO:0003844">
    <property type="term" value="F:1,4-alpha-glucan branching enzyme activity"/>
    <property type="evidence" value="ECO:0007669"/>
    <property type="project" value="UniProtKB-UniRule"/>
</dbReference>
<dbReference type="GO" id="GO:0043169">
    <property type="term" value="F:cation binding"/>
    <property type="evidence" value="ECO:0007669"/>
    <property type="project" value="InterPro"/>
</dbReference>
<dbReference type="GO" id="GO:0004553">
    <property type="term" value="F:hydrolase activity, hydrolyzing O-glycosyl compounds"/>
    <property type="evidence" value="ECO:0007669"/>
    <property type="project" value="InterPro"/>
</dbReference>
<dbReference type="GO" id="GO:0005978">
    <property type="term" value="P:glycogen biosynthetic process"/>
    <property type="evidence" value="ECO:0007669"/>
    <property type="project" value="UniProtKB-UniRule"/>
</dbReference>
<dbReference type="CDD" id="cd11322">
    <property type="entry name" value="AmyAc_Glg_BE"/>
    <property type="match status" value="1"/>
</dbReference>
<dbReference type="CDD" id="cd02855">
    <property type="entry name" value="E_set_GBE_prok_N"/>
    <property type="match status" value="1"/>
</dbReference>
<dbReference type="FunFam" id="2.60.40.10:FF:000169">
    <property type="entry name" value="1,4-alpha-glucan branching enzyme GlgB"/>
    <property type="match status" value="1"/>
</dbReference>
<dbReference type="FunFam" id="2.60.40.1180:FF:000002">
    <property type="entry name" value="1,4-alpha-glucan branching enzyme GlgB"/>
    <property type="match status" value="1"/>
</dbReference>
<dbReference type="FunFam" id="3.20.20.80:FF:000003">
    <property type="entry name" value="1,4-alpha-glucan branching enzyme GlgB"/>
    <property type="match status" value="1"/>
</dbReference>
<dbReference type="Gene3D" id="3.20.20.80">
    <property type="entry name" value="Glycosidases"/>
    <property type="match status" value="1"/>
</dbReference>
<dbReference type="Gene3D" id="2.60.40.1180">
    <property type="entry name" value="Golgi alpha-mannosidase II"/>
    <property type="match status" value="1"/>
</dbReference>
<dbReference type="Gene3D" id="2.60.40.10">
    <property type="entry name" value="Immunoglobulins"/>
    <property type="match status" value="2"/>
</dbReference>
<dbReference type="HAMAP" id="MF_00685">
    <property type="entry name" value="GlgB"/>
    <property type="match status" value="1"/>
</dbReference>
<dbReference type="InterPro" id="IPR006048">
    <property type="entry name" value="A-amylase/branching_C"/>
</dbReference>
<dbReference type="InterPro" id="IPR037439">
    <property type="entry name" value="Branching_enzy"/>
</dbReference>
<dbReference type="InterPro" id="IPR006407">
    <property type="entry name" value="GlgB"/>
</dbReference>
<dbReference type="InterPro" id="IPR054169">
    <property type="entry name" value="GlgB_N"/>
</dbReference>
<dbReference type="InterPro" id="IPR044143">
    <property type="entry name" value="GlgB_N_E_set_prok"/>
</dbReference>
<dbReference type="InterPro" id="IPR006047">
    <property type="entry name" value="Glyco_hydro_13_cat_dom"/>
</dbReference>
<dbReference type="InterPro" id="IPR004193">
    <property type="entry name" value="Glyco_hydro_13_N"/>
</dbReference>
<dbReference type="InterPro" id="IPR013780">
    <property type="entry name" value="Glyco_hydro_b"/>
</dbReference>
<dbReference type="InterPro" id="IPR017853">
    <property type="entry name" value="Glycoside_hydrolase_SF"/>
</dbReference>
<dbReference type="InterPro" id="IPR013783">
    <property type="entry name" value="Ig-like_fold"/>
</dbReference>
<dbReference type="InterPro" id="IPR014756">
    <property type="entry name" value="Ig_E-set"/>
</dbReference>
<dbReference type="NCBIfam" id="TIGR01515">
    <property type="entry name" value="branching_enzym"/>
    <property type="match status" value="1"/>
</dbReference>
<dbReference type="NCBIfam" id="NF003811">
    <property type="entry name" value="PRK05402.1"/>
    <property type="match status" value="1"/>
</dbReference>
<dbReference type="NCBIfam" id="NF008967">
    <property type="entry name" value="PRK12313.1"/>
    <property type="match status" value="1"/>
</dbReference>
<dbReference type="PANTHER" id="PTHR43651">
    <property type="entry name" value="1,4-ALPHA-GLUCAN-BRANCHING ENZYME"/>
    <property type="match status" value="1"/>
</dbReference>
<dbReference type="PANTHER" id="PTHR43651:SF3">
    <property type="entry name" value="1,4-ALPHA-GLUCAN-BRANCHING ENZYME"/>
    <property type="match status" value="1"/>
</dbReference>
<dbReference type="Pfam" id="PF00128">
    <property type="entry name" value="Alpha-amylase"/>
    <property type="match status" value="1"/>
</dbReference>
<dbReference type="Pfam" id="PF02806">
    <property type="entry name" value="Alpha-amylase_C"/>
    <property type="match status" value="1"/>
</dbReference>
<dbReference type="Pfam" id="PF02922">
    <property type="entry name" value="CBM_48"/>
    <property type="match status" value="1"/>
</dbReference>
<dbReference type="Pfam" id="PF22019">
    <property type="entry name" value="GlgB_N"/>
    <property type="match status" value="1"/>
</dbReference>
<dbReference type="PIRSF" id="PIRSF000463">
    <property type="entry name" value="GlgB"/>
    <property type="match status" value="1"/>
</dbReference>
<dbReference type="SMART" id="SM00642">
    <property type="entry name" value="Aamy"/>
    <property type="match status" value="1"/>
</dbReference>
<dbReference type="SUPFAM" id="SSF51445">
    <property type="entry name" value="(Trans)glycosidases"/>
    <property type="match status" value="1"/>
</dbReference>
<dbReference type="SUPFAM" id="SSF81296">
    <property type="entry name" value="E set domains"/>
    <property type="match status" value="2"/>
</dbReference>
<dbReference type="SUPFAM" id="SSF51011">
    <property type="entry name" value="Glycosyl hydrolase domain"/>
    <property type="match status" value="1"/>
</dbReference>
<sequence>MKKPLNSAEEKKTGDITKAEIEAIKSGLHSNPFALLGVHETPEGFSARCFIPGAEEVSVLTLDGNFVGELKQIDPDGFFEGRIDLSKRQPVRYRACRDDAEWAVTDPYSFGPVLGPMDDYFVREGSHLRLFDRMGAHPLKLEGVEGFHFAVWAPNARRVSVVGDFNNWDGRRHVMRFRKDTGIWEIFAPDVYAGCAYKFEILGANGELLPLKADPYARRGELRPKNASVTAPELTQKWEDQAHREHWAQVDQRRQPISIYEVHAGSWQRREDGTFLSWDELAAQLIPYCTDMGFTHIEFLPITEHPYDPSWGYQTTGLYAPTARFGDPEGFARFVNGAHKVGIGVLLDWVPAHFPTDEHGLRWFDGTALYEHADPRQGFHPDWNTAIYNFGRIEVMSYLINNALYWAEKFHLDGLRVDAVASMLYLDYSRKEGEWIPNEYGGRENLESVRFLQKMNSLVYGTHPGVMTIAEESTSWPKVSQPVHEGGLGFGFKWNMGFMHDTLSYFSREPVHRKFHHQELTFGLLYAFTENFVLPLSHDEVVHGKGSLIAKMSGDDWQKFANLRSYYGFMWGYPGKKLLFMGQEFAQWSEWSEKGSLDWNLRQYPMHEGMRRLVRDLNLTYRSKAALHARDCEPDGFRWLVVDDHENSVFAWLRTAPGEKPVAVICNLTPVYRENYYVPLPVAGRWREILNTDAEIYGGSGKGNGGRVQAVDAGGEIGAMLVLPPLATIMLEPEN</sequence>
<reference key="1">
    <citation type="journal article" date="2001" name="Science">
        <title>The genome of the natural genetic engineer Agrobacterium tumefaciens C58.</title>
        <authorList>
            <person name="Wood D.W."/>
            <person name="Setubal J.C."/>
            <person name="Kaul R."/>
            <person name="Monks D.E."/>
            <person name="Kitajima J.P."/>
            <person name="Okura V.K."/>
            <person name="Zhou Y."/>
            <person name="Chen L."/>
            <person name="Wood G.E."/>
            <person name="Almeida N.F. Jr."/>
            <person name="Woo L."/>
            <person name="Chen Y."/>
            <person name="Paulsen I.T."/>
            <person name="Eisen J.A."/>
            <person name="Karp P.D."/>
            <person name="Bovee D. Sr."/>
            <person name="Chapman P."/>
            <person name="Clendenning J."/>
            <person name="Deatherage G."/>
            <person name="Gillet W."/>
            <person name="Grant C."/>
            <person name="Kutyavin T."/>
            <person name="Levy R."/>
            <person name="Li M.-J."/>
            <person name="McClelland E."/>
            <person name="Palmieri A."/>
            <person name="Raymond C."/>
            <person name="Rouse G."/>
            <person name="Saenphimmachak C."/>
            <person name="Wu Z."/>
            <person name="Romero P."/>
            <person name="Gordon D."/>
            <person name="Zhang S."/>
            <person name="Yoo H."/>
            <person name="Tao Y."/>
            <person name="Biddle P."/>
            <person name="Jung M."/>
            <person name="Krespan W."/>
            <person name="Perry M."/>
            <person name="Gordon-Kamm B."/>
            <person name="Liao L."/>
            <person name="Kim S."/>
            <person name="Hendrick C."/>
            <person name="Zhao Z.-Y."/>
            <person name="Dolan M."/>
            <person name="Chumley F."/>
            <person name="Tingey S.V."/>
            <person name="Tomb J.-F."/>
            <person name="Gordon M.P."/>
            <person name="Olson M.V."/>
            <person name="Nester E.W."/>
        </authorList>
    </citation>
    <scope>NUCLEOTIDE SEQUENCE [LARGE SCALE GENOMIC DNA]</scope>
    <source>
        <strain>C58 / ATCC 33970</strain>
    </source>
</reference>
<reference key="2">
    <citation type="journal article" date="2001" name="Science">
        <title>Genome sequence of the plant pathogen and biotechnology agent Agrobacterium tumefaciens C58.</title>
        <authorList>
            <person name="Goodner B."/>
            <person name="Hinkle G."/>
            <person name="Gattung S."/>
            <person name="Miller N."/>
            <person name="Blanchard M."/>
            <person name="Qurollo B."/>
            <person name="Goldman B.S."/>
            <person name="Cao Y."/>
            <person name="Askenazi M."/>
            <person name="Halling C."/>
            <person name="Mullin L."/>
            <person name="Houmiel K."/>
            <person name="Gordon J."/>
            <person name="Vaudin M."/>
            <person name="Iartchouk O."/>
            <person name="Epp A."/>
            <person name="Liu F."/>
            <person name="Wollam C."/>
            <person name="Allinger M."/>
            <person name="Doughty D."/>
            <person name="Scott C."/>
            <person name="Lappas C."/>
            <person name="Markelz B."/>
            <person name="Flanagan C."/>
            <person name="Crowell C."/>
            <person name="Gurson J."/>
            <person name="Lomo C."/>
            <person name="Sear C."/>
            <person name="Strub G."/>
            <person name="Cielo C."/>
            <person name="Slater S."/>
        </authorList>
    </citation>
    <scope>NUCLEOTIDE SEQUENCE [LARGE SCALE GENOMIC DNA]</scope>
    <source>
        <strain>C58 / ATCC 33970</strain>
    </source>
</reference>
<proteinExistence type="inferred from homology"/>
<keyword id="KW-0119">Carbohydrate metabolism</keyword>
<keyword id="KW-0320">Glycogen biosynthesis</keyword>
<keyword id="KW-0321">Glycogen metabolism</keyword>
<keyword id="KW-0328">Glycosyltransferase</keyword>
<keyword id="KW-1185">Reference proteome</keyword>
<keyword id="KW-0808">Transferase</keyword>
<protein>
    <recommendedName>
        <fullName evidence="1">1,4-alpha-glucan branching enzyme GlgB</fullName>
        <ecNumber evidence="1">2.4.1.18</ecNumber>
    </recommendedName>
    <alternativeName>
        <fullName evidence="1">1,4-alpha-D-glucan:1,4-alpha-D-glucan 6-glucosyl-transferase</fullName>
    </alternativeName>
    <alternativeName>
        <fullName evidence="1">Alpha-(1-&gt;4)-glucan branching enzyme</fullName>
    </alternativeName>
    <alternativeName>
        <fullName evidence="1">Glycogen branching enzyme</fullName>
        <shortName evidence="1">BE</shortName>
    </alternativeName>
</protein>
<accession>Q8U8L4</accession>
<organism>
    <name type="scientific">Agrobacterium fabrum (strain C58 / ATCC 33970)</name>
    <name type="common">Agrobacterium tumefaciens (strain C58)</name>
    <dbReference type="NCBI Taxonomy" id="176299"/>
    <lineage>
        <taxon>Bacteria</taxon>
        <taxon>Pseudomonadati</taxon>
        <taxon>Pseudomonadota</taxon>
        <taxon>Alphaproteobacteria</taxon>
        <taxon>Hyphomicrobiales</taxon>
        <taxon>Rhizobiaceae</taxon>
        <taxon>Rhizobium/Agrobacterium group</taxon>
        <taxon>Agrobacterium</taxon>
        <taxon>Agrobacterium tumefaciens complex</taxon>
    </lineage>
</organism>
<evidence type="ECO:0000255" key="1">
    <source>
        <dbReference type="HAMAP-Rule" id="MF_00685"/>
    </source>
</evidence>
<comment type="function">
    <text evidence="1">Catalyzes the formation of the alpha-1,6-glucosidic linkages in glycogen by scission of a 1,4-alpha-linked oligosaccharide from growing alpha-1,4-glucan chains and the subsequent attachment of the oligosaccharide to the alpha-1,6 position.</text>
</comment>
<comment type="catalytic activity">
    <reaction evidence="1">
        <text>Transfers a segment of a (1-&gt;4)-alpha-D-glucan chain to a primary hydroxy group in a similar glucan chain.</text>
        <dbReference type="EC" id="2.4.1.18"/>
    </reaction>
</comment>
<comment type="pathway">
    <text evidence="1">Glycan biosynthesis; glycogen biosynthesis.</text>
</comment>
<comment type="subunit">
    <text evidence="1">Monomer.</text>
</comment>
<comment type="similarity">
    <text evidence="1">Belongs to the glycosyl hydrolase 13 family. GlgB subfamily.</text>
</comment>
<gene>
    <name evidence="1" type="primary">glgB</name>
    <name type="ordered locus">Atu4077</name>
    <name type="ORF">AGR_L_1558</name>
</gene>
<feature type="chain" id="PRO_0000188670" description="1,4-alpha-glucan branching enzyme GlgB">
    <location>
        <begin position="1"/>
        <end position="735"/>
    </location>
</feature>
<feature type="active site" description="Nucleophile" evidence="1">
    <location>
        <position position="418"/>
    </location>
</feature>
<feature type="active site" description="Proton donor" evidence="1">
    <location>
        <position position="471"/>
    </location>
</feature>